<gene>
    <name type="primary">Stxbp5l</name>
    <name type="synonym">Llgl4</name>
</gene>
<keyword id="KW-0007">Acetylation</keyword>
<keyword id="KW-0025">Alternative splicing</keyword>
<keyword id="KW-1003">Cell membrane</keyword>
<keyword id="KW-0175">Coiled coil</keyword>
<keyword id="KW-0963">Cytoplasm</keyword>
<keyword id="KW-0268">Exocytosis</keyword>
<keyword id="KW-0472">Membrane</keyword>
<keyword id="KW-0488">Methylation</keyword>
<keyword id="KW-0597">Phosphoprotein</keyword>
<keyword id="KW-0653">Protein transport</keyword>
<keyword id="KW-1185">Reference proteome</keyword>
<keyword id="KW-0677">Repeat</keyword>
<keyword id="KW-0813">Transport</keyword>
<keyword id="KW-0832">Ubl conjugation</keyword>
<keyword id="KW-0853">WD repeat</keyword>
<feature type="chain" id="PRO_0000051248" description="Syntaxin-binding protein 5-like">
    <location>
        <begin position="1"/>
        <end position="1185"/>
    </location>
</feature>
<feature type="repeat" description="WD 1">
    <location>
        <begin position="73"/>
        <end position="106"/>
    </location>
</feature>
<feature type="repeat" description="WD 2">
    <location>
        <begin position="113"/>
        <end position="152"/>
    </location>
</feature>
<feature type="repeat" description="WD 3">
    <location>
        <begin position="157"/>
        <end position="193"/>
    </location>
</feature>
<feature type="repeat" description="WD 4">
    <location>
        <begin position="212"/>
        <end position="246"/>
    </location>
</feature>
<feature type="repeat" description="WD 5">
    <location>
        <begin position="252"/>
        <end position="284"/>
    </location>
</feature>
<feature type="repeat" description="WD 6">
    <location>
        <begin position="306"/>
        <end position="348"/>
    </location>
</feature>
<feature type="repeat" description="WD 7">
    <location>
        <begin position="356"/>
        <end position="390"/>
    </location>
</feature>
<feature type="repeat" description="WD 8">
    <location>
        <begin position="412"/>
        <end position="489"/>
    </location>
</feature>
<feature type="repeat" description="WD 9">
    <location>
        <begin position="517"/>
        <end position="628"/>
    </location>
</feature>
<feature type="repeat" description="WD 10">
    <location>
        <begin position="642"/>
        <end position="704"/>
    </location>
</feature>
<feature type="repeat" description="WD 11">
    <location>
        <begin position="831"/>
        <end position="888"/>
    </location>
</feature>
<feature type="repeat" description="WD 12">
    <location>
        <begin position="897"/>
        <end position="968"/>
    </location>
</feature>
<feature type="repeat" description="WD 13">
    <location>
        <begin position="973"/>
        <end position="1017"/>
    </location>
</feature>
<feature type="repeat" description="WD 14">
    <location>
        <begin position="1031"/>
        <end position="1054"/>
    </location>
</feature>
<feature type="domain" description="v-SNARE coiled-coil homology" evidence="2">
    <location>
        <begin position="1120"/>
        <end position="1180"/>
    </location>
</feature>
<feature type="region of interest" description="Disordered" evidence="3">
    <location>
        <begin position="15"/>
        <end position="44"/>
    </location>
</feature>
<feature type="region of interest" description="Disordered" evidence="3">
    <location>
        <begin position="567"/>
        <end position="601"/>
    </location>
</feature>
<feature type="region of interest" description="Disordered" evidence="3">
    <location>
        <begin position="747"/>
        <end position="770"/>
    </location>
</feature>
<feature type="compositionally biased region" description="Low complexity" evidence="3">
    <location>
        <begin position="16"/>
        <end position="26"/>
    </location>
</feature>
<feature type="compositionally biased region" description="Low complexity" evidence="3">
    <location>
        <begin position="578"/>
        <end position="592"/>
    </location>
</feature>
<feature type="compositionally biased region" description="Polar residues" evidence="3">
    <location>
        <begin position="747"/>
        <end position="768"/>
    </location>
</feature>
<feature type="modified residue" description="N-acetylmethionine" evidence="1">
    <location>
        <position position="1"/>
    </location>
</feature>
<feature type="modified residue" description="Phosphothreonine" evidence="11">
    <location>
        <position position="567"/>
    </location>
</feature>
<feature type="modified residue" description="Phosphoserine" evidence="11">
    <location>
        <position position="573"/>
    </location>
</feature>
<feature type="modified residue" description="Phosphoserine" evidence="11">
    <location>
        <position position="588"/>
    </location>
</feature>
<feature type="modified residue" description="Phosphoserine" evidence="7">
    <location>
        <position position="592"/>
    </location>
</feature>
<feature type="modified residue" description="Phosphothreonine" evidence="11">
    <location>
        <position position="595"/>
    </location>
</feature>
<feature type="modified residue" description="Phosphoserine" evidence="11">
    <location>
        <position position="598"/>
    </location>
</feature>
<feature type="modified residue" description="Omega-N-methylarginine" evidence="12">
    <location>
        <position position="708"/>
    </location>
</feature>
<feature type="modified residue" description="Phosphoserine" evidence="7">
    <location>
        <position position="762"/>
    </location>
</feature>
<feature type="modified residue" description="Phosphoserine" evidence="7">
    <location>
        <position position="764"/>
    </location>
</feature>
<feature type="modified residue" description="Phosphoserine" evidence="7">
    <location>
        <position position="765"/>
    </location>
</feature>
<feature type="modified residue" description="Phosphoserine" evidence="7">
    <location>
        <position position="770"/>
    </location>
</feature>
<feature type="modified residue" description="Phosphoserine" evidence="7">
    <location>
        <position position="771"/>
    </location>
</feature>
<feature type="modified residue" description="Phosphoserine" evidence="11">
    <location>
        <position position="792"/>
    </location>
</feature>
<feature type="modified residue" description="Phosphoserine" evidence="7">
    <location>
        <position position="799"/>
    </location>
</feature>
<feature type="modified residue" description="Phosphoserine" evidence="7">
    <location>
        <position position="811"/>
    </location>
</feature>
<feature type="modified residue" description="Phosphoserine" evidence="7">
    <location>
        <position position="819"/>
    </location>
</feature>
<feature type="modified residue" description="Phosphoserine" evidence="7">
    <location>
        <position position="821"/>
    </location>
</feature>
<feature type="modified residue" description="Phosphoserine" evidence="7 11">
    <location>
        <position position="822"/>
    </location>
</feature>
<feature type="modified residue" description="Phosphothreonine" evidence="11">
    <location>
        <position position="1092"/>
    </location>
</feature>
<feature type="splice variant" id="VSP_016300" description="In isoform 7." evidence="9">
    <location>
        <begin position="157"/>
        <end position="1185"/>
    </location>
</feature>
<feature type="splice variant" id="VSP_016299" description="In isoform 6." evidence="9">
    <location>
        <begin position="467"/>
        <end position="1185"/>
    </location>
</feature>
<feature type="splice variant" id="VSP_016295" description="In isoform 3, isoform 4 and isoform 5." evidence="8 9">
    <original>DNFCMRGLSNFYPDLTKRIRTSYQS</original>
    <variation>G</variation>
    <location>
        <begin position="703"/>
        <end position="727"/>
    </location>
</feature>
<feature type="splice variant" id="VSP_016296" description="In isoform 2 and isoform 4." evidence="8">
    <location>
        <begin position="749"/>
        <end position="805"/>
    </location>
</feature>
<feature type="splice variant" id="VSP_016297" description="In isoform 5." evidence="9">
    <original>SLPSLRPMLDVNYLPLTDMR</original>
    <variation>RYMVYLLLTDNHNNASKVKW</variation>
    <location>
        <begin position="1006"/>
        <end position="1025"/>
    </location>
</feature>
<feature type="splice variant" id="VSP_016298" description="In isoform 5." evidence="9">
    <location>
        <begin position="1026"/>
        <end position="1185"/>
    </location>
</feature>
<feature type="sequence variant" description="Results in attenuation of insulin secretion; increased protein stability." evidence="5">
    <original>S</original>
    <variation>L</variation>
    <location>
        <position position="937"/>
    </location>
</feature>
<evidence type="ECO:0000250" key="1">
    <source>
        <dbReference type="UniProtKB" id="Q9Y2K9"/>
    </source>
</evidence>
<evidence type="ECO:0000255" key="2">
    <source>
        <dbReference type="PROSITE-ProRule" id="PRU00290"/>
    </source>
</evidence>
<evidence type="ECO:0000256" key="3">
    <source>
        <dbReference type="SAM" id="MobiDB-lite"/>
    </source>
</evidence>
<evidence type="ECO:0000269" key="4">
    <source>
    </source>
</evidence>
<evidence type="ECO:0000269" key="5">
    <source>
    </source>
</evidence>
<evidence type="ECO:0000269" key="6">
    <source>
    </source>
</evidence>
<evidence type="ECO:0000269" key="7">
    <source>
    </source>
</evidence>
<evidence type="ECO:0000303" key="8">
    <source>
    </source>
</evidence>
<evidence type="ECO:0000303" key="9">
    <source>
    </source>
</evidence>
<evidence type="ECO:0000305" key="10"/>
<evidence type="ECO:0007744" key="11">
    <source>
    </source>
</evidence>
<evidence type="ECO:0007744" key="12">
    <source>
    </source>
</evidence>
<comment type="function">
    <text evidence="1 5 6 7">Plays a role in vesicle trafficking and exocytosis inhibition (PubMed:25002582). In pancreatic beta-cells, inhibits insulin secretion probably by interacting with and regulating STX1A and STX4, key t-SNARE proteins involved in the fusion of insulin granules to the plasma membrane (PubMed:21998599). Also plays a role in neurotransmitter release by inhibiting basal acetylcholine release from axon terminals and by preventing synaptic fatigue upon repetitive stimulation (PubMed:24744148). Promotes as well axonal outgrowth (By similarity).</text>
</comment>
<comment type="subunit">
    <text evidence="5">Interacts with STX1A and STX4.</text>
</comment>
<comment type="subcellular location">
    <subcellularLocation>
        <location evidence="10">Cytoplasm</location>
    </subcellularLocation>
    <subcellularLocation>
        <location evidence="10">Cell membrane</location>
        <topology evidence="10">Peripheral membrane protein</topology>
    </subcellularLocation>
    <subcellularLocation>
        <location evidence="10">Membrane</location>
        <topology evidence="10">Peripheral membrane protein</topology>
    </subcellularLocation>
    <text evidence="10">Cytoplasmic, and associated with vesicular membranes and the plasma membrane.</text>
</comment>
<comment type="alternative products">
    <event type="alternative splicing"/>
    <isoform>
        <id>Q5DQR4-1</id>
        <name>1</name>
        <name>Tomosyn-2 isoform xb</name>
        <sequence type="displayed"/>
    </isoform>
    <isoform>
        <id>Q5DQR4-2</id>
        <name>2</name>
        <name>Tomosyn-2 isoform m</name>
        <sequence type="described" ref="VSP_016296"/>
    </isoform>
    <isoform>
        <id>Q5DQR4-3</id>
        <name>3</name>
        <name>Tomosyn-2 isoform b</name>
        <sequence type="described" ref="VSP_016295"/>
    </isoform>
    <isoform>
        <id>Q5DQR4-4</id>
        <name>4</name>
        <name>Tomosyn-2 isoform s</name>
        <sequence type="described" ref="VSP_016295 VSP_016296"/>
    </isoform>
    <isoform>
        <id>Q5DQR4-5</id>
        <name>5</name>
        <sequence type="described" ref="VSP_016295 VSP_016297 VSP_016298"/>
    </isoform>
    <isoform>
        <id>Q5DQR4-6</id>
        <name>6</name>
        <sequence type="described" ref="VSP_016299"/>
    </isoform>
    <isoform>
        <id>Q5DQR4-7</id>
        <name>7</name>
        <sequence type="described" ref="VSP_016300"/>
    </isoform>
</comment>
<comment type="tissue specificity">
    <text evidence="4 5">Detected in hippocampus and cerebellum (PubMed:15659226). Expressed in pancreatic beta-cells where it modulates insulin secretion (PubMed:21998599).</text>
</comment>
<comment type="PTM">
    <text evidence="7">Phosphorylated, leading to STXBP5L increased turnover and subsequent de-repression of insulin secretion (PubMed:25002582). Phosphorylated on serine residues in response to glucose or phorbol esters (PubMed:25002582).</text>
</comment>
<comment type="PTM">
    <text evidence="7">Ubiquitinated by the E3 ligase SYVN1, leading to STXBP5L proteasomal degradation.</text>
</comment>
<comment type="disruption phenotype">
    <text evidence="6">Mutant mice are born at the expected Mendelian rate and show normal body weight development. However, they display reduced sensorimotor gating and impaired motor performance.</text>
</comment>
<comment type="similarity">
    <text evidence="10">Belongs to the WD repeat L(2)GL family.</text>
</comment>
<protein>
    <recommendedName>
        <fullName>Syntaxin-binding protein 5-like</fullName>
    </recommendedName>
    <alternativeName>
        <fullName>Lethal(2) giant larvae protein homolog 4</fullName>
    </alternativeName>
    <alternativeName>
        <fullName evidence="8">Tomosyn-2</fullName>
    </alternativeName>
</protein>
<sequence length="1185" mass="131844">MKKFNFRKVLDGLTASSPGSGSSSGSNSGGAGSGSVHPGGTAGLPREEIQESLTSDYFQICKTVRHGFPYQPTALAFDPVQKILAIGTRTGAIRILGRPGVDCYCQHESGAAVLQLQFLINEGALVSASSDDTLHLWNLRQKRPAILHSLKFNRERITYCHLPFQSKWLYVGTERGNTHIVNIESFILSGYVIMWNKAIELSTKTHPGPVVHLSDSPRDEGKLLIGYENGTVVFWDLKSKRAELRVYYDEAIHSIDWHHEGKQFMCSHSDGSLTLWNLKSPSRPFQTTVPHGKSQREGRKSESCKPILKVEYKTCRNSEPFIIFSGGLSYDKACRRPSLTIMHGKAITVLEMDHPIVEFLTLCETPYPNEFQEPYAVAVLLEKDLIVVDLTQTNFPIFENPYPMDIHESPVTCTAYFADCPPDLILVLYSIGVKHKKQGYSNKEWPVSGGAWNLGAQTYPEIIITGHADGTIKFWDASAMTLQMLYKLKTSKVFEKQKAGEGKQTCELVEEDPFAVQMIYWCPESRIFCVSGVSAYVIIYKFSRHEVTTEIVSLEVRLQCDVEDIITPEPETSPPFPDLSSQLPPSRSLSGSTNTVSSEGVTKDSIPCLSVKTRPVRMPPGYQADLVIQLVWVDGEPPQQITSLSISSAYGIVAFGNCTGLVVVDFIQKTVLLSMGTIDLYRSSDLYQRQPRSPRKNRQFIADNFCMRGLSNFYPDLTKRIRTSYQSLTELNDSPVPLELERCKSPTSDHVNGHCTSPTSQSCSSGKRLSSADVSKVNRWGPGRPPFRKAQSAACMEISLPVTTEETRENSYNRSRSSSISSIDKDSKEAITALYFMESFARKNDSTVSPCLFVGTSLGMVVLISLNLPSSDEQRFTEPVVVLPSGTFLSLKGAVLTFSCMDRTGSLMQPPYEVWRDPNNTDENEKTWKRKLVMNYSSSSQEMGDHQYTIICSEKQAKVFSLPSQTCLYVHNITETSFILQADVVVMCNSACLACFCANGHIMIMSLPSLRPMLDVNYLPLTDMRIARTFCFTNEGQALYLVSPTEIQRLTYSQEMCDNIQDMLGDLFTPIETPEAQNRGFLKGLFGGSGQTFDREELFGEASAGKASRSLAQHIPGPGSIEGMKGAAGGVMGELTRARIALDERGQRLGELEEKTAGMMTSAEAFSKHAHELMLKYKDKKWYQF</sequence>
<organism>
    <name type="scientific">Mus musculus</name>
    <name type="common">Mouse</name>
    <dbReference type="NCBI Taxonomy" id="10090"/>
    <lineage>
        <taxon>Eukaryota</taxon>
        <taxon>Metazoa</taxon>
        <taxon>Chordata</taxon>
        <taxon>Craniata</taxon>
        <taxon>Vertebrata</taxon>
        <taxon>Euteleostomi</taxon>
        <taxon>Mammalia</taxon>
        <taxon>Eutheria</taxon>
        <taxon>Euarchontoglires</taxon>
        <taxon>Glires</taxon>
        <taxon>Rodentia</taxon>
        <taxon>Myomorpha</taxon>
        <taxon>Muroidea</taxon>
        <taxon>Muridae</taxon>
        <taxon>Murinae</taxon>
        <taxon>Mus</taxon>
        <taxon>Mus</taxon>
    </lineage>
</organism>
<reference key="1">
    <citation type="journal article" date="2005" name="J. Neurochem.">
        <title>Two distinct genes drive expression of seven tomosyn isoforms in the mammalian brain, sharing a conserved structure with a unique variable domain.</title>
        <authorList>
            <person name="Groffen A.J.A."/>
            <person name="Jacobsen L."/>
            <person name="Schut D."/>
            <person name="Verhage M."/>
        </authorList>
    </citation>
    <scope>NUCLEOTIDE SEQUENCE [GENOMIC DNA / MRNA] (ISOFORMS 1; 2; 3 AND 4)</scope>
    <scope>TISSUE SPECIFICITY</scope>
    <source>
        <strain>129/Ola</strain>
    </source>
</reference>
<reference key="2">
    <citation type="journal article" date="2005" name="Science">
        <title>The transcriptional landscape of the mammalian genome.</title>
        <authorList>
            <person name="Carninci P."/>
            <person name="Kasukawa T."/>
            <person name="Katayama S."/>
            <person name="Gough J."/>
            <person name="Frith M.C."/>
            <person name="Maeda N."/>
            <person name="Oyama R."/>
            <person name="Ravasi T."/>
            <person name="Lenhard B."/>
            <person name="Wells C."/>
            <person name="Kodzius R."/>
            <person name="Shimokawa K."/>
            <person name="Bajic V.B."/>
            <person name="Brenner S.E."/>
            <person name="Batalov S."/>
            <person name="Forrest A.R."/>
            <person name="Zavolan M."/>
            <person name="Davis M.J."/>
            <person name="Wilming L.G."/>
            <person name="Aidinis V."/>
            <person name="Allen J.E."/>
            <person name="Ambesi-Impiombato A."/>
            <person name="Apweiler R."/>
            <person name="Aturaliya R.N."/>
            <person name="Bailey T.L."/>
            <person name="Bansal M."/>
            <person name="Baxter L."/>
            <person name="Beisel K.W."/>
            <person name="Bersano T."/>
            <person name="Bono H."/>
            <person name="Chalk A.M."/>
            <person name="Chiu K.P."/>
            <person name="Choudhary V."/>
            <person name="Christoffels A."/>
            <person name="Clutterbuck D.R."/>
            <person name="Crowe M.L."/>
            <person name="Dalla E."/>
            <person name="Dalrymple B.P."/>
            <person name="de Bono B."/>
            <person name="Della Gatta G."/>
            <person name="di Bernardo D."/>
            <person name="Down T."/>
            <person name="Engstrom P."/>
            <person name="Fagiolini M."/>
            <person name="Faulkner G."/>
            <person name="Fletcher C.F."/>
            <person name="Fukushima T."/>
            <person name="Furuno M."/>
            <person name="Futaki S."/>
            <person name="Gariboldi M."/>
            <person name="Georgii-Hemming P."/>
            <person name="Gingeras T.R."/>
            <person name="Gojobori T."/>
            <person name="Green R.E."/>
            <person name="Gustincich S."/>
            <person name="Harbers M."/>
            <person name="Hayashi Y."/>
            <person name="Hensch T.K."/>
            <person name="Hirokawa N."/>
            <person name="Hill D."/>
            <person name="Huminiecki L."/>
            <person name="Iacono M."/>
            <person name="Ikeo K."/>
            <person name="Iwama A."/>
            <person name="Ishikawa T."/>
            <person name="Jakt M."/>
            <person name="Kanapin A."/>
            <person name="Katoh M."/>
            <person name="Kawasawa Y."/>
            <person name="Kelso J."/>
            <person name="Kitamura H."/>
            <person name="Kitano H."/>
            <person name="Kollias G."/>
            <person name="Krishnan S.P."/>
            <person name="Kruger A."/>
            <person name="Kummerfeld S.K."/>
            <person name="Kurochkin I.V."/>
            <person name="Lareau L.F."/>
            <person name="Lazarevic D."/>
            <person name="Lipovich L."/>
            <person name="Liu J."/>
            <person name="Liuni S."/>
            <person name="McWilliam S."/>
            <person name="Madan Babu M."/>
            <person name="Madera M."/>
            <person name="Marchionni L."/>
            <person name="Matsuda H."/>
            <person name="Matsuzawa S."/>
            <person name="Miki H."/>
            <person name="Mignone F."/>
            <person name="Miyake S."/>
            <person name="Morris K."/>
            <person name="Mottagui-Tabar S."/>
            <person name="Mulder N."/>
            <person name="Nakano N."/>
            <person name="Nakauchi H."/>
            <person name="Ng P."/>
            <person name="Nilsson R."/>
            <person name="Nishiguchi S."/>
            <person name="Nishikawa S."/>
            <person name="Nori F."/>
            <person name="Ohara O."/>
            <person name="Okazaki Y."/>
            <person name="Orlando V."/>
            <person name="Pang K.C."/>
            <person name="Pavan W.J."/>
            <person name="Pavesi G."/>
            <person name="Pesole G."/>
            <person name="Petrovsky N."/>
            <person name="Piazza S."/>
            <person name="Reed J."/>
            <person name="Reid J.F."/>
            <person name="Ring B.Z."/>
            <person name="Ringwald M."/>
            <person name="Rost B."/>
            <person name="Ruan Y."/>
            <person name="Salzberg S.L."/>
            <person name="Sandelin A."/>
            <person name="Schneider C."/>
            <person name="Schoenbach C."/>
            <person name="Sekiguchi K."/>
            <person name="Semple C.A."/>
            <person name="Seno S."/>
            <person name="Sessa L."/>
            <person name="Sheng Y."/>
            <person name="Shibata Y."/>
            <person name="Shimada H."/>
            <person name="Shimada K."/>
            <person name="Silva D."/>
            <person name="Sinclair B."/>
            <person name="Sperling S."/>
            <person name="Stupka E."/>
            <person name="Sugiura K."/>
            <person name="Sultana R."/>
            <person name="Takenaka Y."/>
            <person name="Taki K."/>
            <person name="Tammoja K."/>
            <person name="Tan S.L."/>
            <person name="Tang S."/>
            <person name="Taylor M.S."/>
            <person name="Tegner J."/>
            <person name="Teichmann S.A."/>
            <person name="Ueda H.R."/>
            <person name="van Nimwegen E."/>
            <person name="Verardo R."/>
            <person name="Wei C.L."/>
            <person name="Yagi K."/>
            <person name="Yamanishi H."/>
            <person name="Zabarovsky E."/>
            <person name="Zhu S."/>
            <person name="Zimmer A."/>
            <person name="Hide W."/>
            <person name="Bult C."/>
            <person name="Grimmond S.M."/>
            <person name="Teasdale R.D."/>
            <person name="Liu E.T."/>
            <person name="Brusic V."/>
            <person name="Quackenbush J."/>
            <person name="Wahlestedt C."/>
            <person name="Mattick J.S."/>
            <person name="Hume D.A."/>
            <person name="Kai C."/>
            <person name="Sasaki D."/>
            <person name="Tomaru Y."/>
            <person name="Fukuda S."/>
            <person name="Kanamori-Katayama M."/>
            <person name="Suzuki M."/>
            <person name="Aoki J."/>
            <person name="Arakawa T."/>
            <person name="Iida J."/>
            <person name="Imamura K."/>
            <person name="Itoh M."/>
            <person name="Kato T."/>
            <person name="Kawaji H."/>
            <person name="Kawagashira N."/>
            <person name="Kawashima T."/>
            <person name="Kojima M."/>
            <person name="Kondo S."/>
            <person name="Konno H."/>
            <person name="Nakano K."/>
            <person name="Ninomiya N."/>
            <person name="Nishio T."/>
            <person name="Okada M."/>
            <person name="Plessy C."/>
            <person name="Shibata K."/>
            <person name="Shiraki T."/>
            <person name="Suzuki S."/>
            <person name="Tagami M."/>
            <person name="Waki K."/>
            <person name="Watahiki A."/>
            <person name="Okamura-Oho Y."/>
            <person name="Suzuki H."/>
            <person name="Kawai J."/>
            <person name="Hayashizaki Y."/>
        </authorList>
    </citation>
    <scope>NUCLEOTIDE SEQUENCE [LARGE SCALE MRNA] (ISOFORMS 5; 6 AND 7)</scope>
    <source>
        <strain>C57BL/6J</strain>
        <tissue>Cerebellum</tissue>
        <tissue>Embryo</tissue>
        <tissue>Olfactory bulb</tissue>
    </source>
</reference>
<reference key="3">
    <citation type="journal article" date="2010" name="Cell">
        <title>A tissue-specific atlas of mouse protein phosphorylation and expression.</title>
        <authorList>
            <person name="Huttlin E.L."/>
            <person name="Jedrychowski M.P."/>
            <person name="Elias J.E."/>
            <person name="Goswami T."/>
            <person name="Rad R."/>
            <person name="Beausoleil S.A."/>
            <person name="Villen J."/>
            <person name="Haas W."/>
            <person name="Sowa M.E."/>
            <person name="Gygi S.P."/>
        </authorList>
    </citation>
    <scope>PHOSPHORYLATION [LARGE SCALE ANALYSIS] AT THR-567; SER-573; SER-588; THR-595; SER-598; SER-792; SER-822 AND THR-1092</scope>
    <scope>IDENTIFICATION BY MASS SPECTROMETRY [LARGE SCALE ANALYSIS]</scope>
    <source>
        <tissue>Brain</tissue>
        <tissue>Kidney</tissue>
    </source>
</reference>
<reference key="4">
    <citation type="journal article" date="2011" name="PLoS Genet.">
        <title>Positional cloning of a type 2 diabetes quantitative trait locus; tomosyn-2, a negative regulator of insulin secretion.</title>
        <authorList>
            <person name="Bhatnagar S."/>
            <person name="Oler A.T."/>
            <person name="Rabaglia M.E."/>
            <person name="Stapleton D.S."/>
            <person name="Schueler K.L."/>
            <person name="Truchan N.A."/>
            <person name="Worzella S.L."/>
            <person name="Stoehr J.P."/>
            <person name="Clee S.M."/>
            <person name="Yandell B.S."/>
            <person name="Keller M.P."/>
            <person name="Thurmond D.C."/>
            <person name="Attie A.D."/>
        </authorList>
    </citation>
    <scope>FUNCTION</scope>
    <scope>INTERACTION WITH STX1A AND STX4</scope>
    <scope>TISSUE SPECIFICITY</scope>
    <scope>VARIANT LEU-937</scope>
</reference>
<reference key="5">
    <citation type="journal article" date="2014" name="Mol. Cell. Proteomics">
        <title>Immunoaffinity enrichment and mass spectrometry analysis of protein methylation.</title>
        <authorList>
            <person name="Guo A."/>
            <person name="Gu H."/>
            <person name="Zhou J."/>
            <person name="Mulhern D."/>
            <person name="Wang Y."/>
            <person name="Lee K.A."/>
            <person name="Yang V."/>
            <person name="Aguiar M."/>
            <person name="Kornhauser J."/>
            <person name="Jia X."/>
            <person name="Ren J."/>
            <person name="Beausoleil S.A."/>
            <person name="Silva J.C."/>
            <person name="Vemulapalli V."/>
            <person name="Bedford M.T."/>
            <person name="Comb M.J."/>
        </authorList>
    </citation>
    <scope>METHYLATION [LARGE SCALE ANALYSIS] AT ARG-708</scope>
    <scope>IDENTIFICATION BY MASS SPECTROMETRY [LARGE SCALE ANALYSIS]</scope>
    <source>
        <tissue>Brain</tissue>
    </source>
</reference>
<reference key="6">
    <citation type="journal article" date="2014" name="J. Biol. Chem.">
        <title>Phosphorylation and degradation of tomosyn-2 de-represses insulin secretion.</title>
        <authorList>
            <person name="Bhatnagar S."/>
            <person name="Soni M.S."/>
            <person name="Wrighton L.S."/>
            <person name="Hebert A.S."/>
            <person name="Zhou A.S."/>
            <person name="Paul P.K."/>
            <person name="Gregg T."/>
            <person name="Rabaglia M.E."/>
            <person name="Keller M.P."/>
            <person name="Coon J.J."/>
            <person name="Attie A.D."/>
        </authorList>
    </citation>
    <scope>FUNCTION</scope>
    <scope>UBIQUITINATION</scope>
    <scope>PHOSPHORYLATION AT SER-592; SER-762; SER-764; SER-765; SER-770; SER-771; SER-799; SER-811; SER-819; SER-821 AND SER-822</scope>
</reference>
<reference key="7">
    <citation type="journal article" date="2015" name="Brain Struct. Funct.">
        <title>Tomosyn-2 is required for normal motor performance in mice and sustains neurotransmission at motor endplates.</title>
        <authorList>
            <person name="Geerts C.J."/>
            <person name="Plomp J.J."/>
            <person name="Koopmans B."/>
            <person name="Loos M."/>
            <person name="van der Pijl E.M."/>
            <person name="van der Valk M.A."/>
            <person name="Verhage M."/>
            <person name="Groffen A.J."/>
        </authorList>
    </citation>
    <scope>FUNCTION</scope>
    <scope>DISRUPTION PHENOTYPE</scope>
</reference>
<proteinExistence type="evidence at protein level"/>
<dbReference type="EMBL" id="AY542354">
    <property type="protein sequence ID" value="AAT68171.1"/>
    <property type="molecule type" value="Genomic_DNA"/>
</dbReference>
<dbReference type="EMBL" id="AY542328">
    <property type="protein sequence ID" value="AAT68171.1"/>
    <property type="status" value="JOINED"/>
    <property type="molecule type" value="Genomic_DNA"/>
</dbReference>
<dbReference type="EMBL" id="AY542329">
    <property type="protein sequence ID" value="AAT68171.1"/>
    <property type="status" value="JOINED"/>
    <property type="molecule type" value="Genomic_DNA"/>
</dbReference>
<dbReference type="EMBL" id="AY542331">
    <property type="protein sequence ID" value="AAT68171.1"/>
    <property type="status" value="JOINED"/>
    <property type="molecule type" value="Genomic_DNA"/>
</dbReference>
<dbReference type="EMBL" id="AY542330">
    <property type="protein sequence ID" value="AAT68171.1"/>
    <property type="status" value="JOINED"/>
    <property type="molecule type" value="Genomic_DNA"/>
</dbReference>
<dbReference type="EMBL" id="AY542332">
    <property type="protein sequence ID" value="AAT68171.1"/>
    <property type="status" value="JOINED"/>
    <property type="molecule type" value="Genomic_DNA"/>
</dbReference>
<dbReference type="EMBL" id="AY542334">
    <property type="protein sequence ID" value="AAT68171.1"/>
    <property type="status" value="JOINED"/>
    <property type="molecule type" value="Genomic_DNA"/>
</dbReference>
<dbReference type="EMBL" id="AY542336">
    <property type="protein sequence ID" value="AAT68171.1"/>
    <property type="status" value="JOINED"/>
    <property type="molecule type" value="Genomic_DNA"/>
</dbReference>
<dbReference type="EMBL" id="AY542338">
    <property type="protein sequence ID" value="AAT68171.1"/>
    <property type="status" value="JOINED"/>
    <property type="molecule type" value="Genomic_DNA"/>
</dbReference>
<dbReference type="EMBL" id="AY542340">
    <property type="protein sequence ID" value="AAT68171.1"/>
    <property type="status" value="JOINED"/>
    <property type="molecule type" value="Genomic_DNA"/>
</dbReference>
<dbReference type="EMBL" id="AY542349">
    <property type="protein sequence ID" value="AAT68171.1"/>
    <property type="status" value="JOINED"/>
    <property type="molecule type" value="Genomic_DNA"/>
</dbReference>
<dbReference type="EMBL" id="AY542348">
    <property type="protein sequence ID" value="AAT68171.1"/>
    <property type="status" value="JOINED"/>
    <property type="molecule type" value="Genomic_DNA"/>
</dbReference>
<dbReference type="EMBL" id="AY542347">
    <property type="protein sequence ID" value="AAT68171.1"/>
    <property type="status" value="JOINED"/>
    <property type="molecule type" value="Genomic_DNA"/>
</dbReference>
<dbReference type="EMBL" id="AY542346">
    <property type="protein sequence ID" value="AAT68171.1"/>
    <property type="status" value="JOINED"/>
    <property type="molecule type" value="Genomic_DNA"/>
</dbReference>
<dbReference type="EMBL" id="AY542345">
    <property type="protein sequence ID" value="AAT68171.1"/>
    <property type="status" value="JOINED"/>
    <property type="molecule type" value="Genomic_DNA"/>
</dbReference>
<dbReference type="EMBL" id="AY542344">
    <property type="protein sequence ID" value="AAT68171.1"/>
    <property type="status" value="JOINED"/>
    <property type="molecule type" value="Genomic_DNA"/>
</dbReference>
<dbReference type="EMBL" id="AY542343">
    <property type="protein sequence ID" value="AAT68171.1"/>
    <property type="status" value="JOINED"/>
    <property type="molecule type" value="Genomic_DNA"/>
</dbReference>
<dbReference type="EMBL" id="AY542342">
    <property type="protein sequence ID" value="AAT68171.1"/>
    <property type="status" value="JOINED"/>
    <property type="molecule type" value="Genomic_DNA"/>
</dbReference>
<dbReference type="EMBL" id="AY542341">
    <property type="protein sequence ID" value="AAT68171.1"/>
    <property type="status" value="JOINED"/>
    <property type="molecule type" value="Genomic_DNA"/>
</dbReference>
<dbReference type="EMBL" id="AY542353">
    <property type="protein sequence ID" value="AAT68171.1"/>
    <property type="status" value="JOINED"/>
    <property type="molecule type" value="Genomic_DNA"/>
</dbReference>
<dbReference type="EMBL" id="AY542352">
    <property type="protein sequence ID" value="AAT68171.1"/>
    <property type="status" value="JOINED"/>
    <property type="molecule type" value="Genomic_DNA"/>
</dbReference>
<dbReference type="EMBL" id="AY542351">
    <property type="protein sequence ID" value="AAT68171.1"/>
    <property type="status" value="JOINED"/>
    <property type="molecule type" value="Genomic_DNA"/>
</dbReference>
<dbReference type="EMBL" id="AY542350">
    <property type="protein sequence ID" value="AAT68171.1"/>
    <property type="status" value="JOINED"/>
    <property type="molecule type" value="Genomic_DNA"/>
</dbReference>
<dbReference type="EMBL" id="AY542339">
    <property type="protein sequence ID" value="AAT68171.1"/>
    <property type="status" value="JOINED"/>
    <property type="molecule type" value="Genomic_DNA"/>
</dbReference>
<dbReference type="EMBL" id="AY542337">
    <property type="protein sequence ID" value="AAT68171.1"/>
    <property type="status" value="JOINED"/>
    <property type="molecule type" value="Genomic_DNA"/>
</dbReference>
<dbReference type="EMBL" id="AY542335">
    <property type="protein sequence ID" value="AAT68171.1"/>
    <property type="status" value="JOINED"/>
    <property type="molecule type" value="Genomic_DNA"/>
</dbReference>
<dbReference type="EMBL" id="AY542333">
    <property type="protein sequence ID" value="AAT68171.1"/>
    <property type="status" value="JOINED"/>
    <property type="molecule type" value="Genomic_DNA"/>
</dbReference>
<dbReference type="EMBL" id="AY542354">
    <property type="protein sequence ID" value="AAT68172.1"/>
    <property type="molecule type" value="Genomic_DNA"/>
</dbReference>
<dbReference type="EMBL" id="AY542328">
    <property type="protein sequence ID" value="AAT68172.1"/>
    <property type="status" value="JOINED"/>
    <property type="molecule type" value="Genomic_DNA"/>
</dbReference>
<dbReference type="EMBL" id="AY542329">
    <property type="protein sequence ID" value="AAT68172.1"/>
    <property type="status" value="JOINED"/>
    <property type="molecule type" value="Genomic_DNA"/>
</dbReference>
<dbReference type="EMBL" id="AY542330">
    <property type="protein sequence ID" value="AAT68172.1"/>
    <property type="status" value="JOINED"/>
    <property type="molecule type" value="Genomic_DNA"/>
</dbReference>
<dbReference type="EMBL" id="AY542332">
    <property type="protein sequence ID" value="AAT68172.1"/>
    <property type="status" value="JOINED"/>
    <property type="molecule type" value="Genomic_DNA"/>
</dbReference>
<dbReference type="EMBL" id="AY542335">
    <property type="protein sequence ID" value="AAT68172.1"/>
    <property type="status" value="JOINED"/>
    <property type="molecule type" value="Genomic_DNA"/>
</dbReference>
<dbReference type="EMBL" id="AY542334">
    <property type="protein sequence ID" value="AAT68172.1"/>
    <property type="status" value="JOINED"/>
    <property type="molecule type" value="Genomic_DNA"/>
</dbReference>
<dbReference type="EMBL" id="AY542333">
    <property type="protein sequence ID" value="AAT68172.1"/>
    <property type="status" value="JOINED"/>
    <property type="molecule type" value="Genomic_DNA"/>
</dbReference>
<dbReference type="EMBL" id="AY542331">
    <property type="protein sequence ID" value="AAT68172.1"/>
    <property type="status" value="JOINED"/>
    <property type="molecule type" value="Genomic_DNA"/>
</dbReference>
<dbReference type="EMBL" id="AY542336">
    <property type="protein sequence ID" value="AAT68172.1"/>
    <property type="status" value="JOINED"/>
    <property type="molecule type" value="Genomic_DNA"/>
</dbReference>
<dbReference type="EMBL" id="AY542345">
    <property type="protein sequence ID" value="AAT68172.1"/>
    <property type="status" value="JOINED"/>
    <property type="molecule type" value="Genomic_DNA"/>
</dbReference>
<dbReference type="EMBL" id="AY542344">
    <property type="protein sequence ID" value="AAT68172.1"/>
    <property type="status" value="JOINED"/>
    <property type="molecule type" value="Genomic_DNA"/>
</dbReference>
<dbReference type="EMBL" id="AY542343">
    <property type="protein sequence ID" value="AAT68172.1"/>
    <property type="status" value="JOINED"/>
    <property type="molecule type" value="Genomic_DNA"/>
</dbReference>
<dbReference type="EMBL" id="AY542342">
    <property type="protein sequence ID" value="AAT68172.1"/>
    <property type="status" value="JOINED"/>
    <property type="molecule type" value="Genomic_DNA"/>
</dbReference>
<dbReference type="EMBL" id="AY542341">
    <property type="protein sequence ID" value="AAT68172.1"/>
    <property type="status" value="JOINED"/>
    <property type="molecule type" value="Genomic_DNA"/>
</dbReference>
<dbReference type="EMBL" id="AY542340">
    <property type="protein sequence ID" value="AAT68172.1"/>
    <property type="status" value="JOINED"/>
    <property type="molecule type" value="Genomic_DNA"/>
</dbReference>
<dbReference type="EMBL" id="AY542339">
    <property type="protein sequence ID" value="AAT68172.1"/>
    <property type="status" value="JOINED"/>
    <property type="molecule type" value="Genomic_DNA"/>
</dbReference>
<dbReference type="EMBL" id="AY542338">
    <property type="protein sequence ID" value="AAT68172.1"/>
    <property type="status" value="JOINED"/>
    <property type="molecule type" value="Genomic_DNA"/>
</dbReference>
<dbReference type="EMBL" id="AY542337">
    <property type="protein sequence ID" value="AAT68172.1"/>
    <property type="status" value="JOINED"/>
    <property type="molecule type" value="Genomic_DNA"/>
</dbReference>
<dbReference type="EMBL" id="AY542353">
    <property type="protein sequence ID" value="AAT68172.1"/>
    <property type="status" value="JOINED"/>
    <property type="molecule type" value="Genomic_DNA"/>
</dbReference>
<dbReference type="EMBL" id="AY542352">
    <property type="protein sequence ID" value="AAT68172.1"/>
    <property type="status" value="JOINED"/>
    <property type="molecule type" value="Genomic_DNA"/>
</dbReference>
<dbReference type="EMBL" id="AY542351">
    <property type="protein sequence ID" value="AAT68172.1"/>
    <property type="status" value="JOINED"/>
    <property type="molecule type" value="Genomic_DNA"/>
</dbReference>
<dbReference type="EMBL" id="AY542350">
    <property type="protein sequence ID" value="AAT68172.1"/>
    <property type="status" value="JOINED"/>
    <property type="molecule type" value="Genomic_DNA"/>
</dbReference>
<dbReference type="EMBL" id="AY542349">
    <property type="protein sequence ID" value="AAT68172.1"/>
    <property type="status" value="JOINED"/>
    <property type="molecule type" value="Genomic_DNA"/>
</dbReference>
<dbReference type="EMBL" id="AY542347">
    <property type="protein sequence ID" value="AAT68172.1"/>
    <property type="status" value="JOINED"/>
    <property type="molecule type" value="Genomic_DNA"/>
</dbReference>
<dbReference type="EMBL" id="AY542354">
    <property type="protein sequence ID" value="AAT68173.1"/>
    <property type="molecule type" value="Genomic_DNA"/>
</dbReference>
<dbReference type="EMBL" id="AY542328">
    <property type="protein sequence ID" value="AAT68173.1"/>
    <property type="status" value="JOINED"/>
    <property type="molecule type" value="Genomic_DNA"/>
</dbReference>
<dbReference type="EMBL" id="AY542329">
    <property type="protein sequence ID" value="AAT68173.1"/>
    <property type="status" value="JOINED"/>
    <property type="molecule type" value="Genomic_DNA"/>
</dbReference>
<dbReference type="EMBL" id="AY542331">
    <property type="protein sequence ID" value="AAT68173.1"/>
    <property type="status" value="JOINED"/>
    <property type="molecule type" value="Genomic_DNA"/>
</dbReference>
<dbReference type="EMBL" id="AY542332">
    <property type="protein sequence ID" value="AAT68173.1"/>
    <property type="status" value="JOINED"/>
    <property type="molecule type" value="Genomic_DNA"/>
</dbReference>
<dbReference type="EMBL" id="AY542330">
    <property type="protein sequence ID" value="AAT68173.1"/>
    <property type="status" value="JOINED"/>
    <property type="molecule type" value="Genomic_DNA"/>
</dbReference>
<dbReference type="EMBL" id="AY542333">
    <property type="protein sequence ID" value="AAT68173.1"/>
    <property type="status" value="JOINED"/>
    <property type="molecule type" value="Genomic_DNA"/>
</dbReference>
<dbReference type="EMBL" id="AY542335">
    <property type="protein sequence ID" value="AAT68173.1"/>
    <property type="status" value="JOINED"/>
    <property type="molecule type" value="Genomic_DNA"/>
</dbReference>
<dbReference type="EMBL" id="AY542337">
    <property type="protein sequence ID" value="AAT68173.1"/>
    <property type="status" value="JOINED"/>
    <property type="molecule type" value="Genomic_DNA"/>
</dbReference>
<dbReference type="EMBL" id="AY542340">
    <property type="protein sequence ID" value="AAT68173.1"/>
    <property type="status" value="JOINED"/>
    <property type="molecule type" value="Genomic_DNA"/>
</dbReference>
<dbReference type="EMBL" id="AY542349">
    <property type="protein sequence ID" value="AAT68173.1"/>
    <property type="status" value="JOINED"/>
    <property type="molecule type" value="Genomic_DNA"/>
</dbReference>
<dbReference type="EMBL" id="AY542348">
    <property type="protein sequence ID" value="AAT68173.1"/>
    <property type="status" value="JOINED"/>
    <property type="molecule type" value="Genomic_DNA"/>
</dbReference>
<dbReference type="EMBL" id="AY542347">
    <property type="protein sequence ID" value="AAT68173.1"/>
    <property type="status" value="JOINED"/>
    <property type="molecule type" value="Genomic_DNA"/>
</dbReference>
<dbReference type="EMBL" id="AY542345">
    <property type="protein sequence ID" value="AAT68173.1"/>
    <property type="status" value="JOINED"/>
    <property type="molecule type" value="Genomic_DNA"/>
</dbReference>
<dbReference type="EMBL" id="AY542338">
    <property type="protein sequence ID" value="AAT68173.1"/>
    <property type="status" value="JOINED"/>
    <property type="molecule type" value="Genomic_DNA"/>
</dbReference>
<dbReference type="EMBL" id="AY542344">
    <property type="protein sequence ID" value="AAT68173.1"/>
    <property type="status" value="JOINED"/>
    <property type="molecule type" value="Genomic_DNA"/>
</dbReference>
<dbReference type="EMBL" id="AY542343">
    <property type="protein sequence ID" value="AAT68173.1"/>
    <property type="status" value="JOINED"/>
    <property type="molecule type" value="Genomic_DNA"/>
</dbReference>
<dbReference type="EMBL" id="AY542342">
    <property type="protein sequence ID" value="AAT68173.1"/>
    <property type="status" value="JOINED"/>
    <property type="molecule type" value="Genomic_DNA"/>
</dbReference>
<dbReference type="EMBL" id="AY542341">
    <property type="protein sequence ID" value="AAT68173.1"/>
    <property type="status" value="JOINED"/>
    <property type="molecule type" value="Genomic_DNA"/>
</dbReference>
<dbReference type="EMBL" id="AY542353">
    <property type="protein sequence ID" value="AAT68173.1"/>
    <property type="status" value="JOINED"/>
    <property type="molecule type" value="Genomic_DNA"/>
</dbReference>
<dbReference type="EMBL" id="AY542352">
    <property type="protein sequence ID" value="AAT68173.1"/>
    <property type="status" value="JOINED"/>
    <property type="molecule type" value="Genomic_DNA"/>
</dbReference>
<dbReference type="EMBL" id="AY542351">
    <property type="protein sequence ID" value="AAT68173.1"/>
    <property type="status" value="JOINED"/>
    <property type="molecule type" value="Genomic_DNA"/>
</dbReference>
<dbReference type="EMBL" id="AY542350">
    <property type="protein sequence ID" value="AAT68173.1"/>
    <property type="status" value="JOINED"/>
    <property type="molecule type" value="Genomic_DNA"/>
</dbReference>
<dbReference type="EMBL" id="AY542339">
    <property type="protein sequence ID" value="AAT68173.1"/>
    <property type="status" value="JOINED"/>
    <property type="molecule type" value="Genomic_DNA"/>
</dbReference>
<dbReference type="EMBL" id="AY542336">
    <property type="protein sequence ID" value="AAT68173.1"/>
    <property type="status" value="JOINED"/>
    <property type="molecule type" value="Genomic_DNA"/>
</dbReference>
<dbReference type="EMBL" id="AY542334">
    <property type="protein sequence ID" value="AAT68173.1"/>
    <property type="status" value="JOINED"/>
    <property type="molecule type" value="Genomic_DNA"/>
</dbReference>
<dbReference type="EMBL" id="AY542354">
    <property type="protein sequence ID" value="AAT68174.1"/>
    <property type="molecule type" value="Genomic_DNA"/>
</dbReference>
<dbReference type="EMBL" id="AY542329">
    <property type="protein sequence ID" value="AAT68174.1"/>
    <property type="status" value="JOINED"/>
    <property type="molecule type" value="Genomic_DNA"/>
</dbReference>
<dbReference type="EMBL" id="AY542330">
    <property type="protein sequence ID" value="AAT68174.1"/>
    <property type="status" value="JOINED"/>
    <property type="molecule type" value="Genomic_DNA"/>
</dbReference>
<dbReference type="EMBL" id="AY542328">
    <property type="protein sequence ID" value="AAT68174.1"/>
    <property type="status" value="JOINED"/>
    <property type="molecule type" value="Genomic_DNA"/>
</dbReference>
<dbReference type="EMBL" id="AY542331">
    <property type="protein sequence ID" value="AAT68174.1"/>
    <property type="status" value="JOINED"/>
    <property type="molecule type" value="Genomic_DNA"/>
</dbReference>
<dbReference type="EMBL" id="AY542333">
    <property type="protein sequence ID" value="AAT68174.1"/>
    <property type="status" value="JOINED"/>
    <property type="molecule type" value="Genomic_DNA"/>
</dbReference>
<dbReference type="EMBL" id="AY542335">
    <property type="protein sequence ID" value="AAT68174.1"/>
    <property type="status" value="JOINED"/>
    <property type="molecule type" value="Genomic_DNA"/>
</dbReference>
<dbReference type="EMBL" id="AY542337">
    <property type="protein sequence ID" value="AAT68174.1"/>
    <property type="status" value="JOINED"/>
    <property type="molecule type" value="Genomic_DNA"/>
</dbReference>
<dbReference type="EMBL" id="AY542346">
    <property type="protein sequence ID" value="AAT68174.1"/>
    <property type="status" value="JOINED"/>
    <property type="molecule type" value="Genomic_DNA"/>
</dbReference>
<dbReference type="EMBL" id="AY542345">
    <property type="protein sequence ID" value="AAT68174.1"/>
    <property type="status" value="JOINED"/>
    <property type="molecule type" value="Genomic_DNA"/>
</dbReference>
<dbReference type="EMBL" id="AY542344">
    <property type="protein sequence ID" value="AAT68174.1"/>
    <property type="status" value="JOINED"/>
    <property type="molecule type" value="Genomic_DNA"/>
</dbReference>
<dbReference type="EMBL" id="AY542343">
    <property type="protein sequence ID" value="AAT68174.1"/>
    <property type="status" value="JOINED"/>
    <property type="molecule type" value="Genomic_DNA"/>
</dbReference>
<dbReference type="EMBL" id="AY542342">
    <property type="protein sequence ID" value="AAT68174.1"/>
    <property type="status" value="JOINED"/>
    <property type="molecule type" value="Genomic_DNA"/>
</dbReference>
<dbReference type="EMBL" id="AY542341">
    <property type="protein sequence ID" value="AAT68174.1"/>
    <property type="status" value="JOINED"/>
    <property type="molecule type" value="Genomic_DNA"/>
</dbReference>
<dbReference type="EMBL" id="AY542340">
    <property type="protein sequence ID" value="AAT68174.1"/>
    <property type="status" value="JOINED"/>
    <property type="molecule type" value="Genomic_DNA"/>
</dbReference>
<dbReference type="EMBL" id="AY542339">
    <property type="protein sequence ID" value="AAT68174.1"/>
    <property type="status" value="JOINED"/>
    <property type="molecule type" value="Genomic_DNA"/>
</dbReference>
<dbReference type="EMBL" id="AY542338">
    <property type="protein sequence ID" value="AAT68174.1"/>
    <property type="status" value="JOINED"/>
    <property type="molecule type" value="Genomic_DNA"/>
</dbReference>
<dbReference type="EMBL" id="AY542353">
    <property type="protein sequence ID" value="AAT68174.1"/>
    <property type="status" value="JOINED"/>
    <property type="molecule type" value="Genomic_DNA"/>
</dbReference>
<dbReference type="EMBL" id="AY542352">
    <property type="protein sequence ID" value="AAT68174.1"/>
    <property type="status" value="JOINED"/>
    <property type="molecule type" value="Genomic_DNA"/>
</dbReference>
<dbReference type="EMBL" id="AY542351">
    <property type="protein sequence ID" value="AAT68174.1"/>
    <property type="status" value="JOINED"/>
    <property type="molecule type" value="Genomic_DNA"/>
</dbReference>
<dbReference type="EMBL" id="AY542350">
    <property type="protein sequence ID" value="AAT68174.1"/>
    <property type="status" value="JOINED"/>
    <property type="molecule type" value="Genomic_DNA"/>
</dbReference>
<dbReference type="EMBL" id="AY542349">
    <property type="protein sequence ID" value="AAT68174.1"/>
    <property type="status" value="JOINED"/>
    <property type="molecule type" value="Genomic_DNA"/>
</dbReference>
<dbReference type="EMBL" id="AY542347">
    <property type="protein sequence ID" value="AAT68174.1"/>
    <property type="status" value="JOINED"/>
    <property type="molecule type" value="Genomic_DNA"/>
</dbReference>
<dbReference type="EMBL" id="AY542336">
    <property type="protein sequence ID" value="AAT68174.1"/>
    <property type="status" value="JOINED"/>
    <property type="molecule type" value="Genomic_DNA"/>
</dbReference>
<dbReference type="EMBL" id="AY542334">
    <property type="protein sequence ID" value="AAT68174.1"/>
    <property type="status" value="JOINED"/>
    <property type="molecule type" value="Genomic_DNA"/>
</dbReference>
<dbReference type="EMBL" id="AY542332">
    <property type="protein sequence ID" value="AAT68174.1"/>
    <property type="status" value="JOINED"/>
    <property type="molecule type" value="Genomic_DNA"/>
</dbReference>
<dbReference type="EMBL" id="AY542324">
    <property type="protein sequence ID" value="AAT68175.1"/>
    <property type="molecule type" value="mRNA"/>
</dbReference>
<dbReference type="EMBL" id="AY542325">
    <property type="protein sequence ID" value="AAT68176.1"/>
    <property type="molecule type" value="mRNA"/>
</dbReference>
<dbReference type="EMBL" id="AY542326">
    <property type="protein sequence ID" value="AAT68177.1"/>
    <property type="molecule type" value="mRNA"/>
</dbReference>
<dbReference type="EMBL" id="AY542327">
    <property type="protein sequence ID" value="AAT68178.1"/>
    <property type="molecule type" value="mRNA"/>
</dbReference>
<dbReference type="EMBL" id="AK035159">
    <property type="protein sequence ID" value="BAC28964.1"/>
    <property type="molecule type" value="mRNA"/>
</dbReference>
<dbReference type="EMBL" id="AK137325">
    <property type="protein sequence ID" value="BAE23307.1"/>
    <property type="molecule type" value="mRNA"/>
</dbReference>
<dbReference type="EMBL" id="AK161955">
    <property type="protein sequence ID" value="BAE36652.1"/>
    <property type="molecule type" value="mRNA"/>
</dbReference>
<dbReference type="CCDS" id="CCDS28159.2">
    <molecule id="Q5DQR4-1"/>
</dbReference>
<dbReference type="CCDS" id="CCDS49846.1">
    <molecule id="Q5DQR4-4"/>
</dbReference>
<dbReference type="CCDS" id="CCDS49847.1">
    <molecule id="Q5DQR4-3"/>
</dbReference>
<dbReference type="CCDS" id="CCDS49848.1">
    <molecule id="Q5DQR4-2"/>
</dbReference>
<dbReference type="RefSeq" id="NP_001108083.1">
    <molecule id="Q5DQR4-4"/>
    <property type="nucleotide sequence ID" value="NM_001114611.2"/>
</dbReference>
<dbReference type="RefSeq" id="NP_001108084.1">
    <molecule id="Q5DQR4-3"/>
    <property type="nucleotide sequence ID" value="NM_001114612.2"/>
</dbReference>
<dbReference type="RefSeq" id="NP_001108085.1">
    <molecule id="Q5DQR4-2"/>
    <property type="nucleotide sequence ID" value="NM_001114613.2"/>
</dbReference>
<dbReference type="RefSeq" id="NP_766028.2">
    <molecule id="Q5DQR4-1"/>
    <property type="nucleotide sequence ID" value="NM_172440.4"/>
</dbReference>
<dbReference type="RefSeq" id="XP_030104871.1">
    <molecule id="Q5DQR4-3"/>
    <property type="nucleotide sequence ID" value="XM_030249011.2"/>
</dbReference>
<dbReference type="SMR" id="Q5DQR4"/>
<dbReference type="BioGRID" id="228888">
    <property type="interactions" value="1"/>
</dbReference>
<dbReference type="FunCoup" id="Q5DQR4">
    <property type="interactions" value="1722"/>
</dbReference>
<dbReference type="IntAct" id="Q5DQR4">
    <property type="interactions" value="1"/>
</dbReference>
<dbReference type="STRING" id="10090.ENSMUSP00000110435"/>
<dbReference type="iPTMnet" id="Q5DQR4"/>
<dbReference type="PhosphoSitePlus" id="Q5DQR4"/>
<dbReference type="SwissPalm" id="Q5DQR4"/>
<dbReference type="jPOST" id="Q5DQR4"/>
<dbReference type="PaxDb" id="10090-ENSMUSP00000110435"/>
<dbReference type="PeptideAtlas" id="Q5DQR4"/>
<dbReference type="ProteomicsDB" id="257480">
    <molecule id="Q5DQR4-1"/>
</dbReference>
<dbReference type="ProteomicsDB" id="257481">
    <molecule id="Q5DQR4-2"/>
</dbReference>
<dbReference type="ProteomicsDB" id="257482">
    <molecule id="Q5DQR4-3"/>
</dbReference>
<dbReference type="ProteomicsDB" id="257483">
    <molecule id="Q5DQR4-4"/>
</dbReference>
<dbReference type="ProteomicsDB" id="257484">
    <molecule id="Q5DQR4-5"/>
</dbReference>
<dbReference type="ProteomicsDB" id="257485">
    <molecule id="Q5DQR4-6"/>
</dbReference>
<dbReference type="ProteomicsDB" id="257486">
    <molecule id="Q5DQR4-7"/>
</dbReference>
<dbReference type="Antibodypedia" id="32817">
    <property type="antibodies" value="6 antibodies from 5 providers"/>
</dbReference>
<dbReference type="DNASU" id="207227"/>
<dbReference type="Ensembl" id="ENSMUST00000114775.8">
    <molecule id="Q5DQR4-6"/>
    <property type="protein sequence ID" value="ENSMUSP00000110423.2"/>
    <property type="gene ID" value="ENSMUSG00000022829.15"/>
</dbReference>
<dbReference type="Ensembl" id="ENSMUST00000114780.8">
    <molecule id="Q5DQR4-4"/>
    <property type="protein sequence ID" value="ENSMUSP00000110428.2"/>
    <property type="gene ID" value="ENSMUSG00000022829.15"/>
</dbReference>
<dbReference type="Ensembl" id="ENSMUST00000114781.8">
    <molecule id="Q5DQR4-2"/>
    <property type="protein sequence ID" value="ENSMUSP00000110429.2"/>
    <property type="gene ID" value="ENSMUSG00000022829.15"/>
</dbReference>
<dbReference type="Ensembl" id="ENSMUST00000114782.8">
    <molecule id="Q5DQR4-3"/>
    <property type="protein sequence ID" value="ENSMUSP00000110430.2"/>
    <property type="gene ID" value="ENSMUSG00000022829.15"/>
</dbReference>
<dbReference type="Ensembl" id="ENSMUST00000114787.8">
    <molecule id="Q5DQR4-1"/>
    <property type="protein sequence ID" value="ENSMUSP00000110435.2"/>
    <property type="gene ID" value="ENSMUSG00000022829.15"/>
</dbReference>
<dbReference type="GeneID" id="207227"/>
<dbReference type="KEGG" id="mmu:207227"/>
<dbReference type="UCSC" id="uc007zds.2">
    <molecule id="Q5DQR4-1"/>
    <property type="organism name" value="mouse"/>
</dbReference>
<dbReference type="UCSC" id="uc007zdt.2">
    <molecule id="Q5DQR4-2"/>
    <property type="organism name" value="mouse"/>
</dbReference>
<dbReference type="UCSC" id="uc007zdu.2">
    <molecule id="Q5DQR4-3"/>
    <property type="organism name" value="mouse"/>
</dbReference>
<dbReference type="UCSC" id="uc007zdv.2">
    <molecule id="Q5DQR4-4"/>
    <property type="organism name" value="mouse"/>
</dbReference>
<dbReference type="UCSC" id="uc007zdw.2">
    <molecule id="Q5DQR4-5"/>
    <property type="organism name" value="mouse"/>
</dbReference>
<dbReference type="UCSC" id="uc007zdx.2">
    <molecule id="Q5DQR4-6"/>
    <property type="organism name" value="mouse"/>
</dbReference>
<dbReference type="UCSC" id="uc007zdy.2">
    <molecule id="Q5DQR4-7"/>
    <property type="organism name" value="mouse"/>
</dbReference>
<dbReference type="AGR" id="MGI:2443815"/>
<dbReference type="CTD" id="9515"/>
<dbReference type="MGI" id="MGI:2443815">
    <property type="gene designation" value="Stxbp5l"/>
</dbReference>
<dbReference type="VEuPathDB" id="HostDB:ENSMUSG00000022829"/>
<dbReference type="eggNOG" id="KOG1983">
    <property type="taxonomic scope" value="Eukaryota"/>
</dbReference>
<dbReference type="GeneTree" id="ENSGT00950000182906"/>
<dbReference type="HOGENOM" id="CLU_002808_0_0_1"/>
<dbReference type="InParanoid" id="Q5DQR4"/>
<dbReference type="OMA" id="SERTMDC"/>
<dbReference type="OrthoDB" id="19944at2759"/>
<dbReference type="PhylomeDB" id="Q5DQR4"/>
<dbReference type="TreeFam" id="TF314585"/>
<dbReference type="BioGRID-ORCS" id="207227">
    <property type="hits" value="3 hits in 77 CRISPR screens"/>
</dbReference>
<dbReference type="ChiTaRS" id="Stxbp5l">
    <property type="organism name" value="mouse"/>
</dbReference>
<dbReference type="PRO" id="PR:Q5DQR4"/>
<dbReference type="Proteomes" id="UP000000589">
    <property type="component" value="Chromosome 16"/>
</dbReference>
<dbReference type="RNAct" id="Q5DQR4">
    <property type="molecule type" value="protein"/>
</dbReference>
<dbReference type="Bgee" id="ENSMUSG00000022829">
    <property type="expression patterns" value="Expressed in animal zygote and 46 other cell types or tissues"/>
</dbReference>
<dbReference type="GO" id="GO:0031594">
    <property type="term" value="C:neuromuscular junction"/>
    <property type="evidence" value="ECO:0000314"/>
    <property type="project" value="SynGO"/>
</dbReference>
<dbReference type="GO" id="GO:0098992">
    <property type="term" value="C:neuronal dense core vesicle"/>
    <property type="evidence" value="ECO:0000314"/>
    <property type="project" value="SynGO"/>
</dbReference>
<dbReference type="GO" id="GO:0005886">
    <property type="term" value="C:plasma membrane"/>
    <property type="evidence" value="ECO:0000314"/>
    <property type="project" value="MGI"/>
</dbReference>
<dbReference type="GO" id="GO:0019905">
    <property type="term" value="F:syntaxin binding"/>
    <property type="evidence" value="ECO:0000314"/>
    <property type="project" value="MGI"/>
</dbReference>
<dbReference type="GO" id="GO:0006887">
    <property type="term" value="P:exocytosis"/>
    <property type="evidence" value="ECO:0007669"/>
    <property type="project" value="UniProtKB-KW"/>
</dbReference>
<dbReference type="GO" id="GO:0042593">
    <property type="term" value="P:glucose homeostasis"/>
    <property type="evidence" value="ECO:0000315"/>
    <property type="project" value="MGI"/>
</dbReference>
<dbReference type="GO" id="GO:0046676">
    <property type="term" value="P:negative regulation of insulin secretion"/>
    <property type="evidence" value="ECO:0000314"/>
    <property type="project" value="MGI"/>
</dbReference>
<dbReference type="GO" id="GO:0050714">
    <property type="term" value="P:positive regulation of protein secretion"/>
    <property type="evidence" value="ECO:0000314"/>
    <property type="project" value="MGI"/>
</dbReference>
<dbReference type="GO" id="GO:0015031">
    <property type="term" value="P:protein transport"/>
    <property type="evidence" value="ECO:0007669"/>
    <property type="project" value="UniProtKB-KW"/>
</dbReference>
<dbReference type="GO" id="GO:0017157">
    <property type="term" value="P:regulation of exocytosis"/>
    <property type="evidence" value="ECO:0000314"/>
    <property type="project" value="MGI"/>
</dbReference>
<dbReference type="GO" id="GO:2000300">
    <property type="term" value="P:regulation of synaptic vesicle exocytosis"/>
    <property type="evidence" value="ECO:0000314"/>
    <property type="project" value="SynGO"/>
</dbReference>
<dbReference type="CDD" id="cd15893">
    <property type="entry name" value="R-SNARE_STXBP5"/>
    <property type="match status" value="1"/>
</dbReference>
<dbReference type="FunFam" id="1.20.5.110:FF:000001">
    <property type="entry name" value="syntaxin-binding protein 5 isoform X1"/>
    <property type="match status" value="1"/>
</dbReference>
<dbReference type="FunFam" id="2.130.10.10:FF:000521">
    <property type="entry name" value="syntaxin-binding protein 5-like isoform X1"/>
    <property type="match status" value="1"/>
</dbReference>
<dbReference type="Gene3D" id="1.20.5.110">
    <property type="match status" value="1"/>
</dbReference>
<dbReference type="Gene3D" id="2.130.10.10">
    <property type="entry name" value="YVTN repeat-like/Quinoprotein amine dehydrogenase"/>
    <property type="match status" value="3"/>
</dbReference>
<dbReference type="InterPro" id="IPR000664">
    <property type="entry name" value="Lethal2_giant"/>
</dbReference>
<dbReference type="InterPro" id="IPR013905">
    <property type="entry name" value="Lgl_C_dom"/>
</dbReference>
<dbReference type="InterPro" id="IPR013577">
    <property type="entry name" value="LLGL2"/>
</dbReference>
<dbReference type="InterPro" id="IPR042855">
    <property type="entry name" value="V_SNARE_CC"/>
</dbReference>
<dbReference type="InterPro" id="IPR015943">
    <property type="entry name" value="WD40/YVTN_repeat-like_dom_sf"/>
</dbReference>
<dbReference type="InterPro" id="IPR019775">
    <property type="entry name" value="WD40_repeat_CS"/>
</dbReference>
<dbReference type="InterPro" id="IPR036322">
    <property type="entry name" value="WD40_repeat_dom_sf"/>
</dbReference>
<dbReference type="InterPro" id="IPR001680">
    <property type="entry name" value="WD40_rpt"/>
</dbReference>
<dbReference type="PANTHER" id="PTHR10241">
    <property type="entry name" value="LETHAL 2 GIANT LARVAE PROTEIN"/>
    <property type="match status" value="1"/>
</dbReference>
<dbReference type="PANTHER" id="PTHR10241:SF19">
    <property type="entry name" value="SYNTAXIN-BINDING PROTEIN 5-LIKE"/>
    <property type="match status" value="1"/>
</dbReference>
<dbReference type="Pfam" id="PF08596">
    <property type="entry name" value="Lgl_C"/>
    <property type="match status" value="1"/>
</dbReference>
<dbReference type="Pfam" id="PF08366">
    <property type="entry name" value="LLGL"/>
    <property type="match status" value="1"/>
</dbReference>
<dbReference type="Pfam" id="PF00400">
    <property type="entry name" value="WD40"/>
    <property type="match status" value="1"/>
</dbReference>
<dbReference type="PRINTS" id="PR00962">
    <property type="entry name" value="LETHAL2GIANT"/>
</dbReference>
<dbReference type="SMART" id="SM00320">
    <property type="entry name" value="WD40"/>
    <property type="match status" value="6"/>
</dbReference>
<dbReference type="SUPFAM" id="SSF58038">
    <property type="entry name" value="SNARE fusion complex"/>
    <property type="match status" value="1"/>
</dbReference>
<dbReference type="SUPFAM" id="SSF50978">
    <property type="entry name" value="WD40 repeat-like"/>
    <property type="match status" value="2"/>
</dbReference>
<dbReference type="PROSITE" id="PS50892">
    <property type="entry name" value="V_SNARE"/>
    <property type="match status" value="1"/>
</dbReference>
<dbReference type="PROSITE" id="PS00678">
    <property type="entry name" value="WD_REPEATS_1"/>
    <property type="match status" value="3"/>
</dbReference>
<dbReference type="PROSITE" id="PS50082">
    <property type="entry name" value="WD_REPEATS_2"/>
    <property type="match status" value="2"/>
</dbReference>
<dbReference type="PROSITE" id="PS50294">
    <property type="entry name" value="WD_REPEATS_REGION"/>
    <property type="match status" value="1"/>
</dbReference>
<accession>Q5DQR4</accession>
<accession>Q3TSM3</accession>
<accession>Q3UVG2</accession>
<accession>Q5DQR1</accession>
<accession>Q5DQR2</accession>
<accession>Q5DQR3</accession>
<accession>Q8BS52</accession>
<name>STB5L_MOUSE</name>